<gene>
    <name evidence="1" type="primary">hldD</name>
    <name type="ordered locus">BMA0421</name>
</gene>
<reference key="1">
    <citation type="journal article" date="2004" name="Proc. Natl. Acad. Sci. U.S.A.">
        <title>Structural flexibility in the Burkholderia mallei genome.</title>
        <authorList>
            <person name="Nierman W.C."/>
            <person name="DeShazer D."/>
            <person name="Kim H.S."/>
            <person name="Tettelin H."/>
            <person name="Nelson K.E."/>
            <person name="Feldblyum T.V."/>
            <person name="Ulrich R.L."/>
            <person name="Ronning C.M."/>
            <person name="Brinkac L.M."/>
            <person name="Daugherty S.C."/>
            <person name="Davidsen T.D."/>
            <person name="DeBoy R.T."/>
            <person name="Dimitrov G."/>
            <person name="Dodson R.J."/>
            <person name="Durkin A.S."/>
            <person name="Gwinn M.L."/>
            <person name="Haft D.H."/>
            <person name="Khouri H.M."/>
            <person name="Kolonay J.F."/>
            <person name="Madupu R."/>
            <person name="Mohammoud Y."/>
            <person name="Nelson W.C."/>
            <person name="Radune D."/>
            <person name="Romero C.M."/>
            <person name="Sarria S."/>
            <person name="Selengut J."/>
            <person name="Shamblin C."/>
            <person name="Sullivan S.A."/>
            <person name="White O."/>
            <person name="Yu Y."/>
            <person name="Zafar N."/>
            <person name="Zhou L."/>
            <person name="Fraser C.M."/>
        </authorList>
    </citation>
    <scope>NUCLEOTIDE SEQUENCE [LARGE SCALE GENOMIC DNA]</scope>
    <source>
        <strain>ATCC 23344</strain>
    </source>
</reference>
<proteinExistence type="inferred from homology"/>
<feature type="chain" id="PRO_0000255721" description="ADP-L-glycero-D-manno-heptose-6-epimerase">
    <location>
        <begin position="1"/>
        <end position="330"/>
    </location>
</feature>
<feature type="active site" description="Proton acceptor" evidence="1">
    <location>
        <position position="139"/>
    </location>
</feature>
<feature type="active site" description="Proton acceptor" evidence="1">
    <location>
        <position position="177"/>
    </location>
</feature>
<feature type="binding site" evidence="1">
    <location>
        <begin position="11"/>
        <end position="12"/>
    </location>
    <ligand>
        <name>NADP(+)</name>
        <dbReference type="ChEBI" id="CHEBI:58349"/>
    </ligand>
</feature>
<feature type="binding site" evidence="1">
    <location>
        <begin position="32"/>
        <end position="33"/>
    </location>
    <ligand>
        <name>NADP(+)</name>
        <dbReference type="ChEBI" id="CHEBI:58349"/>
    </ligand>
</feature>
<feature type="binding site" evidence="1">
    <location>
        <position position="39"/>
    </location>
    <ligand>
        <name>NADP(+)</name>
        <dbReference type="ChEBI" id="CHEBI:58349"/>
    </ligand>
</feature>
<feature type="binding site" evidence="1">
    <location>
        <position position="54"/>
    </location>
    <ligand>
        <name>NADP(+)</name>
        <dbReference type="ChEBI" id="CHEBI:58349"/>
    </ligand>
</feature>
<feature type="binding site" evidence="1">
    <location>
        <begin position="75"/>
        <end position="79"/>
    </location>
    <ligand>
        <name>NADP(+)</name>
        <dbReference type="ChEBI" id="CHEBI:58349"/>
    </ligand>
</feature>
<feature type="binding site" evidence="1">
    <location>
        <position position="92"/>
    </location>
    <ligand>
        <name>NADP(+)</name>
        <dbReference type="ChEBI" id="CHEBI:58349"/>
    </ligand>
</feature>
<feature type="binding site" evidence="1">
    <location>
        <position position="143"/>
    </location>
    <ligand>
        <name>NADP(+)</name>
        <dbReference type="ChEBI" id="CHEBI:58349"/>
    </ligand>
</feature>
<feature type="binding site" evidence="1">
    <location>
        <position position="168"/>
    </location>
    <ligand>
        <name>substrate</name>
    </ligand>
</feature>
<feature type="binding site" evidence="1">
    <location>
        <position position="169"/>
    </location>
    <ligand>
        <name>NADP(+)</name>
        <dbReference type="ChEBI" id="CHEBI:58349"/>
    </ligand>
</feature>
<feature type="binding site" evidence="1">
    <location>
        <position position="177"/>
    </location>
    <ligand>
        <name>NADP(+)</name>
        <dbReference type="ChEBI" id="CHEBI:58349"/>
    </ligand>
</feature>
<feature type="binding site" evidence="1">
    <location>
        <position position="179"/>
    </location>
    <ligand>
        <name>substrate</name>
    </ligand>
</feature>
<feature type="binding site" evidence="1">
    <location>
        <position position="186"/>
    </location>
    <ligand>
        <name>substrate</name>
    </ligand>
</feature>
<feature type="binding site" evidence="1">
    <location>
        <begin position="200"/>
        <end position="203"/>
    </location>
    <ligand>
        <name>substrate</name>
    </ligand>
</feature>
<feature type="binding site" evidence="1">
    <location>
        <position position="213"/>
    </location>
    <ligand>
        <name>substrate</name>
    </ligand>
</feature>
<feature type="binding site" evidence="1">
    <location>
        <position position="292"/>
    </location>
    <ligand>
        <name>substrate</name>
    </ligand>
</feature>
<name>HLDD_BURMA</name>
<dbReference type="EC" id="5.1.3.20" evidence="1"/>
<dbReference type="EMBL" id="CP000010">
    <property type="protein sequence ID" value="AAU48796.1"/>
    <property type="molecule type" value="Genomic_DNA"/>
</dbReference>
<dbReference type="RefSeq" id="YP_102234.1">
    <property type="nucleotide sequence ID" value="NC_006348.1"/>
</dbReference>
<dbReference type="SMR" id="Q62M34"/>
<dbReference type="KEGG" id="bma:BMA0421"/>
<dbReference type="PATRIC" id="fig|243160.12.peg.428"/>
<dbReference type="eggNOG" id="COG0451">
    <property type="taxonomic scope" value="Bacteria"/>
</dbReference>
<dbReference type="HOGENOM" id="CLU_007383_1_3_4"/>
<dbReference type="UniPathway" id="UPA00356">
    <property type="reaction ID" value="UER00440"/>
</dbReference>
<dbReference type="Proteomes" id="UP000006693">
    <property type="component" value="Chromosome 1"/>
</dbReference>
<dbReference type="GO" id="GO:0008712">
    <property type="term" value="F:ADP-glyceromanno-heptose 6-epimerase activity"/>
    <property type="evidence" value="ECO:0007669"/>
    <property type="project" value="UniProtKB-UniRule"/>
</dbReference>
<dbReference type="GO" id="GO:0050661">
    <property type="term" value="F:NADP binding"/>
    <property type="evidence" value="ECO:0007669"/>
    <property type="project" value="InterPro"/>
</dbReference>
<dbReference type="GO" id="GO:0097171">
    <property type="term" value="P:ADP-L-glycero-beta-D-manno-heptose biosynthetic process"/>
    <property type="evidence" value="ECO:0007669"/>
    <property type="project" value="UniProtKB-UniPathway"/>
</dbReference>
<dbReference type="GO" id="GO:0005975">
    <property type="term" value="P:carbohydrate metabolic process"/>
    <property type="evidence" value="ECO:0007669"/>
    <property type="project" value="UniProtKB-UniRule"/>
</dbReference>
<dbReference type="CDD" id="cd05248">
    <property type="entry name" value="ADP_GME_SDR_e"/>
    <property type="match status" value="1"/>
</dbReference>
<dbReference type="Gene3D" id="3.40.50.720">
    <property type="entry name" value="NAD(P)-binding Rossmann-like Domain"/>
    <property type="match status" value="1"/>
</dbReference>
<dbReference type="Gene3D" id="3.90.25.10">
    <property type="entry name" value="UDP-galactose 4-epimerase, domain 1"/>
    <property type="match status" value="1"/>
</dbReference>
<dbReference type="HAMAP" id="MF_01601">
    <property type="entry name" value="Heptose_epimerase"/>
    <property type="match status" value="1"/>
</dbReference>
<dbReference type="InterPro" id="IPR001509">
    <property type="entry name" value="Epimerase_deHydtase"/>
</dbReference>
<dbReference type="InterPro" id="IPR011912">
    <property type="entry name" value="Heptose_epim"/>
</dbReference>
<dbReference type="InterPro" id="IPR036291">
    <property type="entry name" value="NAD(P)-bd_dom_sf"/>
</dbReference>
<dbReference type="NCBIfam" id="TIGR02197">
    <property type="entry name" value="heptose_epim"/>
    <property type="match status" value="1"/>
</dbReference>
<dbReference type="PANTHER" id="PTHR43103:SF3">
    <property type="entry name" value="ADP-L-GLYCERO-D-MANNO-HEPTOSE-6-EPIMERASE"/>
    <property type="match status" value="1"/>
</dbReference>
<dbReference type="PANTHER" id="PTHR43103">
    <property type="entry name" value="NUCLEOSIDE-DIPHOSPHATE-SUGAR EPIMERASE"/>
    <property type="match status" value="1"/>
</dbReference>
<dbReference type="Pfam" id="PF01370">
    <property type="entry name" value="Epimerase"/>
    <property type="match status" value="1"/>
</dbReference>
<dbReference type="SUPFAM" id="SSF51735">
    <property type="entry name" value="NAD(P)-binding Rossmann-fold domains"/>
    <property type="match status" value="1"/>
</dbReference>
<keyword id="KW-0119">Carbohydrate metabolism</keyword>
<keyword id="KW-0413">Isomerase</keyword>
<keyword id="KW-0521">NADP</keyword>
<keyword id="KW-1185">Reference proteome</keyword>
<sequence>MTLIVTGAAGFIGANIVKALNERGETRIIAVDNLTRADKFKNLVDCEIDDYLDKTEFVERFARGDFGKVRAVFHEGACSDTMETDGRYMMDNNFRYSRAVLDACLAQGTQFLYASSAAIYGGSSRFVEAREFEAPLNVYGYSKFLFDQVIRRVMPSAKSQIAGFRYFNVYGPRESHKGRMASVAFHNFNQFRAEGKVKLFGEYNGYGPGEQTRDFVSVEDVAKVNLHFFDHPQKSGIFNLGTGRAQPFNDIATTVVNTLRALEGQPALTLAEQVEQGLVEYVPFPDALRGKYQCFTQADQTKLRAAGYDAPFLTVQEGVDRYVRWLFGQL</sequence>
<accession>Q62M34</accession>
<organism>
    <name type="scientific">Burkholderia mallei (strain ATCC 23344)</name>
    <dbReference type="NCBI Taxonomy" id="243160"/>
    <lineage>
        <taxon>Bacteria</taxon>
        <taxon>Pseudomonadati</taxon>
        <taxon>Pseudomonadota</taxon>
        <taxon>Betaproteobacteria</taxon>
        <taxon>Burkholderiales</taxon>
        <taxon>Burkholderiaceae</taxon>
        <taxon>Burkholderia</taxon>
        <taxon>pseudomallei group</taxon>
    </lineage>
</organism>
<comment type="function">
    <text evidence="1">Catalyzes the interconversion between ADP-D-glycero-beta-D-manno-heptose and ADP-L-glycero-beta-D-manno-heptose via an epimerization at carbon 6 of the heptose.</text>
</comment>
<comment type="catalytic activity">
    <reaction evidence="1">
        <text>ADP-D-glycero-beta-D-manno-heptose = ADP-L-glycero-beta-D-manno-heptose</text>
        <dbReference type="Rhea" id="RHEA:17577"/>
        <dbReference type="ChEBI" id="CHEBI:59967"/>
        <dbReference type="ChEBI" id="CHEBI:61506"/>
        <dbReference type="EC" id="5.1.3.20"/>
    </reaction>
</comment>
<comment type="cofactor">
    <cofactor evidence="1">
        <name>NADP(+)</name>
        <dbReference type="ChEBI" id="CHEBI:58349"/>
    </cofactor>
    <text evidence="1">Binds 1 NADP(+) per subunit.</text>
</comment>
<comment type="pathway">
    <text evidence="1">Nucleotide-sugar biosynthesis; ADP-L-glycero-beta-D-manno-heptose biosynthesis; ADP-L-glycero-beta-D-manno-heptose from D-glycero-beta-D-manno-heptose 7-phosphate: step 4/4.</text>
</comment>
<comment type="subunit">
    <text evidence="1">Homopentamer.</text>
</comment>
<comment type="domain">
    <text evidence="1">Contains a large N-terminal NADP-binding domain, and a smaller C-terminal substrate-binding domain.</text>
</comment>
<comment type="similarity">
    <text evidence="1">Belongs to the NAD(P)-dependent epimerase/dehydratase family. HldD subfamily.</text>
</comment>
<protein>
    <recommendedName>
        <fullName evidence="1">ADP-L-glycero-D-manno-heptose-6-epimerase</fullName>
        <ecNumber evidence="1">5.1.3.20</ecNumber>
    </recommendedName>
    <alternativeName>
        <fullName evidence="1">ADP-L-glycero-beta-D-manno-heptose-6-epimerase</fullName>
        <shortName evidence="1">ADP-glyceromanno-heptose 6-epimerase</shortName>
        <shortName evidence="1">ADP-hep 6-epimerase</shortName>
        <shortName evidence="1">AGME</shortName>
    </alternativeName>
</protein>
<evidence type="ECO:0000255" key="1">
    <source>
        <dbReference type="HAMAP-Rule" id="MF_01601"/>
    </source>
</evidence>